<dbReference type="EMBL" id="EC966042">
    <property type="status" value="NOT_ANNOTATED_CDS"/>
    <property type="molecule type" value="mRNA"/>
</dbReference>
<dbReference type="RefSeq" id="XP_010647129.2">
    <property type="nucleotide sequence ID" value="XM_010648827.2"/>
</dbReference>
<dbReference type="SMR" id="A7R385"/>
<dbReference type="EnsemblPlants" id="Vitvi10g04121_t001">
    <property type="protein sequence ID" value="Vitvi10g04121_P001"/>
    <property type="gene ID" value="Vitvi10g04121"/>
</dbReference>
<dbReference type="Gramene" id="Vitvi10g04121_t001">
    <property type="protein sequence ID" value="Vitvi10g04121_P001"/>
    <property type="gene ID" value="Vitvi10g04121"/>
</dbReference>
<dbReference type="OrthoDB" id="689701at2759"/>
<dbReference type="GO" id="GO:0005886">
    <property type="term" value="C:plasma membrane"/>
    <property type="evidence" value="ECO:0007669"/>
    <property type="project" value="UniProtKB-SubCell"/>
</dbReference>
<dbReference type="InterPro" id="IPR006459">
    <property type="entry name" value="CASP/CASPL"/>
</dbReference>
<dbReference type="InterPro" id="IPR006702">
    <property type="entry name" value="CASP_dom"/>
</dbReference>
<dbReference type="NCBIfam" id="TIGR01569">
    <property type="entry name" value="A_tha_TIGR01569"/>
    <property type="match status" value="1"/>
</dbReference>
<dbReference type="PANTHER" id="PTHR33573:SF64">
    <property type="entry name" value="CASP-LIKE PROTEIN 2B1"/>
    <property type="match status" value="1"/>
</dbReference>
<dbReference type="PANTHER" id="PTHR33573">
    <property type="entry name" value="CASP-LIKE PROTEIN 4A4"/>
    <property type="match status" value="1"/>
</dbReference>
<dbReference type="Pfam" id="PF04535">
    <property type="entry name" value="CASP_dom"/>
    <property type="match status" value="1"/>
</dbReference>
<proteinExistence type="evidence at transcript level"/>
<evidence type="ECO:0000250" key="1"/>
<evidence type="ECO:0000255" key="2"/>
<evidence type="ECO:0000305" key="3"/>
<protein>
    <recommendedName>
        <fullName>CASP-like protein 2B1</fullName>
        <shortName>VvCASPL2B1</shortName>
    </recommendedName>
</protein>
<keyword id="KW-1003">Cell membrane</keyword>
<keyword id="KW-0472">Membrane</keyword>
<keyword id="KW-0812">Transmembrane</keyword>
<keyword id="KW-1133">Transmembrane helix</keyword>
<organism>
    <name type="scientific">Vitis vinifera</name>
    <name type="common">Grape</name>
    <dbReference type="NCBI Taxonomy" id="29760"/>
    <lineage>
        <taxon>Eukaryota</taxon>
        <taxon>Viridiplantae</taxon>
        <taxon>Streptophyta</taxon>
        <taxon>Embryophyta</taxon>
        <taxon>Tracheophyta</taxon>
        <taxon>Spermatophyta</taxon>
        <taxon>Magnoliopsida</taxon>
        <taxon>eudicotyledons</taxon>
        <taxon>Gunneridae</taxon>
        <taxon>Pentapetalae</taxon>
        <taxon>rosids</taxon>
        <taxon>Vitales</taxon>
        <taxon>Vitaceae</taxon>
        <taxon>Viteae</taxon>
        <taxon>Vitis</taxon>
    </lineage>
</organism>
<sequence>MSYLGVGVSPGNVPVYHGTNLKVVDRRVRLAELVLRCVICGLGILAAVLVGTDTQVKVIFTIQKKAKFTDMKALVFLVIANGIAAAYSLIQGLRCVVSMVRGSVLFSKPLAWAIFSGDQVIAYLTLAAVAAAAQSSVFGEFGQPELQWMKICNMYGKFCNQVGEGIVSAVGVSLSMVILSGISAFSLFRLYGGNKGTSGGRW</sequence>
<feature type="chain" id="PRO_0000370313" description="CASP-like protein 2B1">
    <location>
        <begin position="1"/>
        <end position="202"/>
    </location>
</feature>
<feature type="topological domain" description="Cytoplasmic" evidence="2">
    <location>
        <begin position="1"/>
        <end position="29"/>
    </location>
</feature>
<feature type="transmembrane region" description="Helical" evidence="2">
    <location>
        <begin position="30"/>
        <end position="50"/>
    </location>
</feature>
<feature type="topological domain" description="Extracellular" evidence="2">
    <location>
        <begin position="51"/>
        <end position="72"/>
    </location>
</feature>
<feature type="transmembrane region" description="Helical" evidence="2">
    <location>
        <begin position="73"/>
        <end position="93"/>
    </location>
</feature>
<feature type="topological domain" description="Cytoplasmic" evidence="2">
    <location>
        <begin position="94"/>
        <end position="109"/>
    </location>
</feature>
<feature type="transmembrane region" description="Helical" evidence="2">
    <location>
        <begin position="110"/>
        <end position="130"/>
    </location>
</feature>
<feature type="topological domain" description="Extracellular" evidence="2">
    <location>
        <begin position="131"/>
        <end position="164"/>
    </location>
</feature>
<feature type="transmembrane region" description="Helical" evidence="2">
    <location>
        <begin position="165"/>
        <end position="185"/>
    </location>
</feature>
<feature type="topological domain" description="Cytoplasmic" evidence="2">
    <location>
        <begin position="186"/>
        <end position="202"/>
    </location>
</feature>
<comment type="subunit">
    <text evidence="1">Homodimer and heterodimers.</text>
</comment>
<comment type="subcellular location">
    <subcellularLocation>
        <location evidence="1">Cell membrane</location>
        <topology evidence="1">Multi-pass membrane protein</topology>
    </subcellularLocation>
</comment>
<comment type="similarity">
    <text evidence="3">Belongs to the Casparian strip membrane proteins (CASP) family.</text>
</comment>
<gene>
    <name type="ORF">GSVIVT00013502001</name>
</gene>
<reference key="1">
    <citation type="journal article" date="2007" name="Nature">
        <title>The grapevine genome sequence suggests ancestral hexaploidization in major angiosperm phyla.</title>
        <authorList>
            <person name="Jaillon O."/>
            <person name="Aury J.-M."/>
            <person name="Noel B."/>
            <person name="Policriti A."/>
            <person name="Clepet C."/>
            <person name="Casagrande A."/>
            <person name="Choisne N."/>
            <person name="Aubourg S."/>
            <person name="Vitulo N."/>
            <person name="Jubin C."/>
            <person name="Vezzi A."/>
            <person name="Legeai F."/>
            <person name="Hugueney P."/>
            <person name="Dasilva C."/>
            <person name="Horner D."/>
            <person name="Mica E."/>
            <person name="Jublot D."/>
            <person name="Poulain J."/>
            <person name="Bruyere C."/>
            <person name="Billault A."/>
            <person name="Segurens B."/>
            <person name="Gouyvenoux M."/>
            <person name="Ugarte E."/>
            <person name="Cattonaro F."/>
            <person name="Anthouard V."/>
            <person name="Vico V."/>
            <person name="Del Fabbro C."/>
            <person name="Alaux M."/>
            <person name="Di Gaspero G."/>
            <person name="Dumas V."/>
            <person name="Felice N."/>
            <person name="Paillard S."/>
            <person name="Juman I."/>
            <person name="Moroldo M."/>
            <person name="Scalabrin S."/>
            <person name="Canaguier A."/>
            <person name="Le Clainche I."/>
            <person name="Malacrida G."/>
            <person name="Durand E."/>
            <person name="Pesole G."/>
            <person name="Laucou V."/>
            <person name="Chatelet P."/>
            <person name="Merdinoglu D."/>
            <person name="Delledonne M."/>
            <person name="Pezzotti M."/>
            <person name="Lecharny A."/>
            <person name="Scarpelli C."/>
            <person name="Artiguenave F."/>
            <person name="Pe M.E."/>
            <person name="Valle G."/>
            <person name="Morgante M."/>
            <person name="Caboche M."/>
            <person name="Adam-Blondon A.-F."/>
            <person name="Weissenbach J."/>
            <person name="Quetier F."/>
            <person name="Wincker P."/>
        </authorList>
    </citation>
    <scope>NUCLEOTIDE SEQUENCE [LARGE SCALE GENOMIC DNA]</scope>
    <source>
        <strain>cv. Pinot noir / PN40024</strain>
    </source>
</reference>
<reference key="2">
    <citation type="submission" date="2006-07" db="EMBL/GenBank/DDBJ databases">
        <title>Expressed sequence tags from grapevine (Vitis vinifera cv. Cabernet Sauvignon).</title>
        <authorList>
            <person name="Reid K.E."/>
            <person name="Liao N."/>
            <person name="Peng F."/>
            <person name="Schlosser J."/>
            <person name="Kirkpatrick R."/>
            <person name="Shukin R."/>
            <person name="Barber S."/>
            <person name="Holt R."/>
            <person name="Siddiqui A."/>
            <person name="Jones S."/>
            <person name="Marra M."/>
            <person name="Bowen P."/>
            <person name="Bohlmann J."/>
            <person name="Martinez Zapater J.M."/>
            <person name="Lund S.T."/>
        </authorList>
    </citation>
    <scope>NUCLEOTIDE SEQUENCE [LARGE SCALE MRNA]</scope>
    <source>
        <strain>cv. Cabernet Sauvignon</strain>
        <tissue>Seed</tissue>
    </source>
</reference>
<reference key="3">
    <citation type="journal article" date="2014" name="Plant Physiol.">
        <title>Functional and evolutionary analysis of the CASPARIAN STRIP MEMBRANE DOMAIN PROTEIN family.</title>
        <authorList>
            <person name="Roppolo D."/>
            <person name="Boeckmann B."/>
            <person name="Pfister A."/>
            <person name="Boutet E."/>
            <person name="Rubio M.C."/>
            <person name="Denervaud-Tendon V."/>
            <person name="Vermeer J.E."/>
            <person name="Gheyselinck J."/>
            <person name="Xenarios I."/>
            <person name="Geldner N."/>
        </authorList>
    </citation>
    <scope>GENE FAMILY</scope>
    <scope>NOMENCLATURE</scope>
</reference>
<name>CSPLC_VITVI</name>
<accession>A7R385</accession>